<evidence type="ECO:0000255" key="1">
    <source>
        <dbReference type="HAMAP-Rule" id="MF_00003"/>
    </source>
</evidence>
<organism>
    <name type="scientific">Treponema pallidum (strain Nichols)</name>
    <dbReference type="NCBI Taxonomy" id="243276"/>
    <lineage>
        <taxon>Bacteria</taxon>
        <taxon>Pseudomonadati</taxon>
        <taxon>Spirochaetota</taxon>
        <taxon>Spirochaetia</taxon>
        <taxon>Spirochaetales</taxon>
        <taxon>Treponemataceae</taxon>
        <taxon>Treponema</taxon>
    </lineage>
</organism>
<name>RBFA_TREPA</name>
<dbReference type="EMBL" id="AE000520">
    <property type="protein sequence ID" value="AAC26580.1"/>
    <property type="molecule type" value="Genomic_DNA"/>
</dbReference>
<dbReference type="PIR" id="G71269">
    <property type="entry name" value="G71269"/>
</dbReference>
<dbReference type="RefSeq" id="WP_010882333.1">
    <property type="nucleotide sequence ID" value="NC_021490.2"/>
</dbReference>
<dbReference type="SMR" id="O83860"/>
<dbReference type="STRING" id="243276.TP_0890"/>
<dbReference type="EnsemblBacteria" id="AAC26580">
    <property type="protein sequence ID" value="AAC26580"/>
    <property type="gene ID" value="TP_0890"/>
</dbReference>
<dbReference type="GeneID" id="93876644"/>
<dbReference type="KEGG" id="tpa:TP_0890"/>
<dbReference type="KEGG" id="tpw:TPANIC_0890"/>
<dbReference type="eggNOG" id="COG0858">
    <property type="taxonomic scope" value="Bacteria"/>
</dbReference>
<dbReference type="HOGENOM" id="CLU_089475_6_5_12"/>
<dbReference type="OrthoDB" id="370444at2"/>
<dbReference type="Proteomes" id="UP000000811">
    <property type="component" value="Chromosome"/>
</dbReference>
<dbReference type="GO" id="GO:0005829">
    <property type="term" value="C:cytosol"/>
    <property type="evidence" value="ECO:0007669"/>
    <property type="project" value="TreeGrafter"/>
</dbReference>
<dbReference type="GO" id="GO:0043024">
    <property type="term" value="F:ribosomal small subunit binding"/>
    <property type="evidence" value="ECO:0007669"/>
    <property type="project" value="TreeGrafter"/>
</dbReference>
<dbReference type="GO" id="GO:0030490">
    <property type="term" value="P:maturation of SSU-rRNA"/>
    <property type="evidence" value="ECO:0007669"/>
    <property type="project" value="UniProtKB-UniRule"/>
</dbReference>
<dbReference type="Gene3D" id="3.30.300.20">
    <property type="match status" value="1"/>
</dbReference>
<dbReference type="HAMAP" id="MF_00003">
    <property type="entry name" value="RbfA"/>
    <property type="match status" value="1"/>
</dbReference>
<dbReference type="InterPro" id="IPR015946">
    <property type="entry name" value="KH_dom-like_a/b"/>
</dbReference>
<dbReference type="InterPro" id="IPR000238">
    <property type="entry name" value="RbfA"/>
</dbReference>
<dbReference type="InterPro" id="IPR023799">
    <property type="entry name" value="RbfA_dom_sf"/>
</dbReference>
<dbReference type="InterPro" id="IPR020053">
    <property type="entry name" value="Ribosome-bd_factorA_CS"/>
</dbReference>
<dbReference type="NCBIfam" id="TIGR00082">
    <property type="entry name" value="rbfA"/>
    <property type="match status" value="1"/>
</dbReference>
<dbReference type="PANTHER" id="PTHR33515">
    <property type="entry name" value="RIBOSOME-BINDING FACTOR A, CHLOROPLASTIC-RELATED"/>
    <property type="match status" value="1"/>
</dbReference>
<dbReference type="PANTHER" id="PTHR33515:SF1">
    <property type="entry name" value="RIBOSOME-BINDING FACTOR A, CHLOROPLASTIC-RELATED"/>
    <property type="match status" value="1"/>
</dbReference>
<dbReference type="Pfam" id="PF02033">
    <property type="entry name" value="RBFA"/>
    <property type="match status" value="1"/>
</dbReference>
<dbReference type="SUPFAM" id="SSF89919">
    <property type="entry name" value="Ribosome-binding factor A, RbfA"/>
    <property type="match status" value="1"/>
</dbReference>
<dbReference type="PROSITE" id="PS01319">
    <property type="entry name" value="RBFA"/>
    <property type="match status" value="1"/>
</dbReference>
<gene>
    <name evidence="1" type="primary">rbfA</name>
    <name type="ordered locus">TP_0890</name>
</gene>
<sequence length="126" mass="14128">MKQVSQLRVRKLGEHIRAEIAQLIMLGKIKDPRVSPFLSVNWVDVSGGMVCARVYVSSFMGKYKTKQGVQGLESAAGFIRSVLAKKLRLRQCPRLSFVYDESVRDGFSLSRKIDRLESGGVQTEHA</sequence>
<protein>
    <recommendedName>
        <fullName evidence="1">Ribosome-binding factor A</fullName>
    </recommendedName>
</protein>
<comment type="function">
    <text evidence="1">One of several proteins that assist in the late maturation steps of the functional core of the 30S ribosomal subunit. Associates with free 30S ribosomal subunits (but not with 30S subunits that are part of 70S ribosomes or polysomes). Required for efficient processing of 16S rRNA. May interact with the 5'-terminal helix region of 16S rRNA.</text>
</comment>
<comment type="subunit">
    <text evidence="1">Monomer. Binds 30S ribosomal subunits, but not 50S ribosomal subunits or 70S ribosomes.</text>
</comment>
<comment type="subcellular location">
    <subcellularLocation>
        <location evidence="1">Cytoplasm</location>
    </subcellularLocation>
</comment>
<comment type="similarity">
    <text evidence="1">Belongs to the RbfA family.</text>
</comment>
<feature type="chain" id="PRO_0000102761" description="Ribosome-binding factor A">
    <location>
        <begin position="1"/>
        <end position="126"/>
    </location>
</feature>
<accession>O83860</accession>
<keyword id="KW-0963">Cytoplasm</keyword>
<keyword id="KW-1185">Reference proteome</keyword>
<keyword id="KW-0690">Ribosome biogenesis</keyword>
<proteinExistence type="inferred from homology"/>
<reference key="1">
    <citation type="journal article" date="1998" name="Science">
        <title>Complete genome sequence of Treponema pallidum, the syphilis spirochete.</title>
        <authorList>
            <person name="Fraser C.M."/>
            <person name="Norris S.J."/>
            <person name="Weinstock G.M."/>
            <person name="White O."/>
            <person name="Sutton G.G."/>
            <person name="Dodson R.J."/>
            <person name="Gwinn M.L."/>
            <person name="Hickey E.K."/>
            <person name="Clayton R.A."/>
            <person name="Ketchum K.A."/>
            <person name="Sodergren E."/>
            <person name="Hardham J.M."/>
            <person name="McLeod M.P."/>
            <person name="Salzberg S.L."/>
            <person name="Peterson J.D."/>
            <person name="Khalak H.G."/>
            <person name="Richardson D.L."/>
            <person name="Howell J.K."/>
            <person name="Chidambaram M."/>
            <person name="Utterback T.R."/>
            <person name="McDonald L.A."/>
            <person name="Artiach P."/>
            <person name="Bowman C."/>
            <person name="Cotton M.D."/>
            <person name="Fujii C."/>
            <person name="Garland S.A."/>
            <person name="Hatch B."/>
            <person name="Horst K."/>
            <person name="Roberts K.M."/>
            <person name="Sandusky M."/>
            <person name="Weidman J.F."/>
            <person name="Smith H.O."/>
            <person name="Venter J.C."/>
        </authorList>
    </citation>
    <scope>NUCLEOTIDE SEQUENCE [LARGE SCALE GENOMIC DNA]</scope>
    <source>
        <strain>Nichols</strain>
    </source>
</reference>